<gene>
    <name evidence="1" type="primary">ves</name>
    <name type="ordered locus">ECIAI39_1312</name>
</gene>
<reference key="1">
    <citation type="journal article" date="2009" name="PLoS Genet.">
        <title>Organised genome dynamics in the Escherichia coli species results in highly diverse adaptive paths.</title>
        <authorList>
            <person name="Touchon M."/>
            <person name="Hoede C."/>
            <person name="Tenaillon O."/>
            <person name="Barbe V."/>
            <person name="Baeriswyl S."/>
            <person name="Bidet P."/>
            <person name="Bingen E."/>
            <person name="Bonacorsi S."/>
            <person name="Bouchier C."/>
            <person name="Bouvet O."/>
            <person name="Calteau A."/>
            <person name="Chiapello H."/>
            <person name="Clermont O."/>
            <person name="Cruveiller S."/>
            <person name="Danchin A."/>
            <person name="Diard M."/>
            <person name="Dossat C."/>
            <person name="Karoui M.E."/>
            <person name="Frapy E."/>
            <person name="Garry L."/>
            <person name="Ghigo J.M."/>
            <person name="Gilles A.M."/>
            <person name="Johnson J."/>
            <person name="Le Bouguenec C."/>
            <person name="Lescat M."/>
            <person name="Mangenot S."/>
            <person name="Martinez-Jehanne V."/>
            <person name="Matic I."/>
            <person name="Nassif X."/>
            <person name="Oztas S."/>
            <person name="Petit M.A."/>
            <person name="Pichon C."/>
            <person name="Rouy Z."/>
            <person name="Ruf C.S."/>
            <person name="Schneider D."/>
            <person name="Tourret J."/>
            <person name="Vacherie B."/>
            <person name="Vallenet D."/>
            <person name="Medigue C."/>
            <person name="Rocha E.P.C."/>
            <person name="Denamur E."/>
        </authorList>
    </citation>
    <scope>NUCLEOTIDE SEQUENCE [LARGE SCALE GENOMIC DNA]</scope>
    <source>
        <strain>IAI39 / ExPEC</strain>
    </source>
</reference>
<sequence length="191" mass="21607">MEYFDMRKMSVNLWRNAAGETREICTFPPAKRDFYWRASIASIAANGEFSLFPGMERIVTLLEGGEMFLESTDRFNHTLKPLQPFAFAADQVVKAKLTAGQMSMDFNIMTRLDVCKAKVRIAERTFTTFGSRGGVVFVINGAWQLGDKLLTTDQGACWFDGRHTLRLLQPQGKLLFSEINWLAGHSPDQVQ</sequence>
<proteinExistence type="inferred from homology"/>
<accession>B7NT35</accession>
<organism>
    <name type="scientific">Escherichia coli O7:K1 (strain IAI39 / ExPEC)</name>
    <dbReference type="NCBI Taxonomy" id="585057"/>
    <lineage>
        <taxon>Bacteria</taxon>
        <taxon>Pseudomonadati</taxon>
        <taxon>Pseudomonadota</taxon>
        <taxon>Gammaproteobacteria</taxon>
        <taxon>Enterobacterales</taxon>
        <taxon>Enterobacteriaceae</taxon>
        <taxon>Escherichia</taxon>
    </lineage>
</organism>
<protein>
    <recommendedName>
        <fullName evidence="1">Protein Ves</fullName>
    </recommendedName>
</protein>
<evidence type="ECO:0000255" key="1">
    <source>
        <dbReference type="HAMAP-Rule" id="MF_01591"/>
    </source>
</evidence>
<dbReference type="EMBL" id="CU928164">
    <property type="protein sequence ID" value="CAR17446.1"/>
    <property type="molecule type" value="Genomic_DNA"/>
</dbReference>
<dbReference type="RefSeq" id="WP_001563457.1">
    <property type="nucleotide sequence ID" value="NC_011750.1"/>
</dbReference>
<dbReference type="RefSeq" id="YP_002407320.1">
    <property type="nucleotide sequence ID" value="NC_011750.1"/>
</dbReference>
<dbReference type="SMR" id="B7NT35"/>
<dbReference type="STRING" id="585057.ECIAI39_1312"/>
<dbReference type="KEGG" id="ect:ECIAI39_1312"/>
<dbReference type="PATRIC" id="fig|585057.6.peg.1374"/>
<dbReference type="HOGENOM" id="CLU_090931_5_0_6"/>
<dbReference type="Proteomes" id="UP000000749">
    <property type="component" value="Chromosome"/>
</dbReference>
<dbReference type="CDD" id="cd20293">
    <property type="entry name" value="cupin_HutD_N"/>
    <property type="match status" value="1"/>
</dbReference>
<dbReference type="Gene3D" id="2.60.120.10">
    <property type="entry name" value="Jelly Rolls"/>
    <property type="match status" value="1"/>
</dbReference>
<dbReference type="HAMAP" id="MF_01591">
    <property type="entry name" value="Ves"/>
    <property type="match status" value="1"/>
</dbReference>
<dbReference type="InterPro" id="IPR014710">
    <property type="entry name" value="RmlC-like_jellyroll"/>
</dbReference>
<dbReference type="InterPro" id="IPR011051">
    <property type="entry name" value="RmlC_Cupin_sf"/>
</dbReference>
<dbReference type="InterPro" id="IPR010282">
    <property type="entry name" value="Uncharacterised_HutD/Ves"/>
</dbReference>
<dbReference type="InterPro" id="IPR023482">
    <property type="entry name" value="Uncharacterised_Ves"/>
</dbReference>
<dbReference type="NCBIfam" id="NF008488">
    <property type="entry name" value="PRK11396.1"/>
    <property type="match status" value="1"/>
</dbReference>
<dbReference type="PANTHER" id="PTHR37943">
    <property type="entry name" value="PROTEIN VES"/>
    <property type="match status" value="1"/>
</dbReference>
<dbReference type="PANTHER" id="PTHR37943:SF1">
    <property type="entry name" value="PROTEIN VES"/>
    <property type="match status" value="1"/>
</dbReference>
<dbReference type="Pfam" id="PF05962">
    <property type="entry name" value="HutD"/>
    <property type="match status" value="1"/>
</dbReference>
<dbReference type="SUPFAM" id="SSF51182">
    <property type="entry name" value="RmlC-like cupins"/>
    <property type="match status" value="1"/>
</dbReference>
<name>VES_ECO7I</name>
<feature type="chain" id="PRO_1000201504" description="Protein Ves">
    <location>
        <begin position="1"/>
        <end position="191"/>
    </location>
</feature>
<comment type="similarity">
    <text evidence="1">Belongs to the Ves family.</text>
</comment>